<gene>
    <name type="primary">LPAR5</name>
    <name type="synonym">GPR92</name>
    <name type="synonym">GPR93</name>
</gene>
<accession>Q9H1C0</accession>
<keyword id="KW-1003">Cell membrane</keyword>
<keyword id="KW-1015">Disulfide bond</keyword>
<keyword id="KW-0297">G-protein coupled receptor</keyword>
<keyword id="KW-0325">Glycoprotein</keyword>
<keyword id="KW-0472">Membrane</keyword>
<keyword id="KW-1267">Proteomics identification</keyword>
<keyword id="KW-0675">Receptor</keyword>
<keyword id="KW-1185">Reference proteome</keyword>
<keyword id="KW-0807">Transducer</keyword>
<keyword id="KW-0812">Transmembrane</keyword>
<keyword id="KW-1133">Transmembrane helix</keyword>
<protein>
    <recommendedName>
        <fullName>Lysophosphatidic acid receptor 5</fullName>
        <shortName>LPA receptor 5</shortName>
        <shortName>LPA-5</shortName>
    </recommendedName>
    <alternativeName>
        <fullName>G-protein coupled receptor 92</fullName>
    </alternativeName>
    <alternativeName>
        <fullName>G-protein coupled receptor 93</fullName>
    </alternativeName>
</protein>
<reference key="1">
    <citation type="journal article" date="2000" name="Nat. Genet.">
        <title>Autosomal dominant hypophosphataemic rickets is associated with mutations in FGF23.</title>
        <authorList>
            <person name="White K.E."/>
            <person name="Evans W.E."/>
            <person name="O'Riordan J.L.H."/>
            <person name="Speer M.C."/>
            <person name="Econs M.J."/>
            <person name="Lorenz-Depiereux B."/>
            <person name="Grabowski M."/>
            <person name="Meitinger T."/>
            <person name="Strom T.M."/>
        </authorList>
    </citation>
    <scope>NUCLEOTIDE SEQUENCE [MRNA]</scope>
</reference>
<reference key="2">
    <citation type="journal article" date="2001" name="Gene">
        <title>Discovery and mapping of ten novel G protein-coupled receptor genes.</title>
        <authorList>
            <person name="Lee D.K."/>
            <person name="Nguyen T."/>
            <person name="Lynch K.R."/>
            <person name="Cheng R."/>
            <person name="Vanti W.B."/>
            <person name="Arkhitko O."/>
            <person name="Lewis T."/>
            <person name="Evans J.F."/>
            <person name="George S.R."/>
            <person name="O'Dowd B.F."/>
        </authorList>
    </citation>
    <scope>NUCLEOTIDE SEQUENCE [GENOMIC DNA]</scope>
</reference>
<reference key="3">
    <citation type="journal article" date="2002" name="FEBS Lett.">
        <title>Identification of G protein-coupled receptor genes from the human genome sequence.</title>
        <authorList>
            <person name="Takeda S."/>
            <person name="Kadowaki S."/>
            <person name="Haga T."/>
            <person name="Takaesu H."/>
            <person name="Mitaku S."/>
        </authorList>
    </citation>
    <scope>NUCLEOTIDE SEQUENCE [LARGE SCALE GENOMIC DNA]</scope>
</reference>
<reference key="4">
    <citation type="journal article" date="2004" name="Genome Res.">
        <title>The status, quality, and expansion of the NIH full-length cDNA project: the Mammalian Gene Collection (MGC).</title>
        <authorList>
            <consortium name="The MGC Project Team"/>
        </authorList>
    </citation>
    <scope>NUCLEOTIDE SEQUENCE [LARGE SCALE MRNA]</scope>
    <source>
        <tissue>B-cell</tissue>
        <tissue>Brain</tissue>
    </source>
</reference>
<proteinExistence type="evidence at protein level"/>
<comment type="function">
    <text>Receptor for lysophosphatidic acid (LPA), a mediator of diverse cellular activities.</text>
</comment>
<comment type="subcellular location">
    <subcellularLocation>
        <location>Cell membrane</location>
        <topology>Multi-pass membrane protein</topology>
    </subcellularLocation>
</comment>
<comment type="tissue specificity">
    <text>Not expressed in frontal cortex, basal forebrain, caudate putamen, thalamus, or hippocampus.</text>
</comment>
<comment type="similarity">
    <text evidence="2">Belongs to the G-protein coupled receptor 1 family.</text>
</comment>
<evidence type="ECO:0000255" key="1"/>
<evidence type="ECO:0000255" key="2">
    <source>
        <dbReference type="PROSITE-ProRule" id="PRU00521"/>
    </source>
</evidence>
<evidence type="ECO:0000256" key="3">
    <source>
        <dbReference type="SAM" id="MobiDB-lite"/>
    </source>
</evidence>
<organism>
    <name type="scientific">Homo sapiens</name>
    <name type="common">Human</name>
    <dbReference type="NCBI Taxonomy" id="9606"/>
    <lineage>
        <taxon>Eukaryota</taxon>
        <taxon>Metazoa</taxon>
        <taxon>Chordata</taxon>
        <taxon>Craniata</taxon>
        <taxon>Vertebrata</taxon>
        <taxon>Euteleostomi</taxon>
        <taxon>Mammalia</taxon>
        <taxon>Eutheria</taxon>
        <taxon>Euarchontoglires</taxon>
        <taxon>Primates</taxon>
        <taxon>Haplorrhini</taxon>
        <taxon>Catarrhini</taxon>
        <taxon>Hominidae</taxon>
        <taxon>Homo</taxon>
    </lineage>
</organism>
<dbReference type="EMBL" id="AJ272207">
    <property type="protein sequence ID" value="CAC03715.1"/>
    <property type="molecule type" value="mRNA"/>
</dbReference>
<dbReference type="EMBL" id="AF411112">
    <property type="protein sequence ID" value="AAL26483.1"/>
    <property type="molecule type" value="Genomic_DNA"/>
</dbReference>
<dbReference type="EMBL" id="AB083600">
    <property type="protein sequence ID" value="BAB89313.1"/>
    <property type="molecule type" value="Genomic_DNA"/>
</dbReference>
<dbReference type="EMBL" id="BC033571">
    <property type="protein sequence ID" value="AAH33571.1"/>
    <property type="molecule type" value="mRNA"/>
</dbReference>
<dbReference type="EMBL" id="BC072394">
    <property type="protein sequence ID" value="AAH72394.1"/>
    <property type="molecule type" value="mRNA"/>
</dbReference>
<dbReference type="CCDS" id="CCDS8553.1"/>
<dbReference type="RefSeq" id="NP_001136433.1">
    <property type="nucleotide sequence ID" value="NM_001142961.1"/>
</dbReference>
<dbReference type="RefSeq" id="NP_065133.1">
    <property type="nucleotide sequence ID" value="NM_020400.6"/>
</dbReference>
<dbReference type="SMR" id="Q9H1C0"/>
<dbReference type="BioGRID" id="121385">
    <property type="interactions" value="3"/>
</dbReference>
<dbReference type="CORUM" id="Q9H1C0"/>
<dbReference type="FunCoup" id="Q9H1C0">
    <property type="interactions" value="828"/>
</dbReference>
<dbReference type="IntAct" id="Q9H1C0">
    <property type="interactions" value="1"/>
</dbReference>
<dbReference type="MINT" id="Q9H1C0"/>
<dbReference type="STRING" id="9606.ENSP00000393098"/>
<dbReference type="BindingDB" id="Q9H1C0"/>
<dbReference type="ChEMBL" id="CHEMBL5700"/>
<dbReference type="GuidetoPHARMACOLOGY" id="124"/>
<dbReference type="SwissLipids" id="SLP:000001578"/>
<dbReference type="GlyCosmos" id="Q9H1C0">
    <property type="glycosylation" value="2 sites, No reported glycans"/>
</dbReference>
<dbReference type="GlyGen" id="Q9H1C0">
    <property type="glycosylation" value="2 sites"/>
</dbReference>
<dbReference type="iPTMnet" id="Q9H1C0"/>
<dbReference type="PhosphoSitePlus" id="Q9H1C0"/>
<dbReference type="BioMuta" id="LPAR5"/>
<dbReference type="DMDM" id="48474954"/>
<dbReference type="jPOST" id="Q9H1C0"/>
<dbReference type="MassIVE" id="Q9H1C0"/>
<dbReference type="PaxDb" id="9606-ENSP00000327875"/>
<dbReference type="PeptideAtlas" id="Q9H1C0"/>
<dbReference type="ProteomicsDB" id="80396"/>
<dbReference type="Antibodypedia" id="2962">
    <property type="antibodies" value="199 antibodies from 31 providers"/>
</dbReference>
<dbReference type="DNASU" id="57121"/>
<dbReference type="Ensembl" id="ENST00000329858.9">
    <property type="protein sequence ID" value="ENSP00000327875.4"/>
    <property type="gene ID" value="ENSG00000184574.10"/>
</dbReference>
<dbReference type="Ensembl" id="ENST00000431922.1">
    <property type="protein sequence ID" value="ENSP00000393098.1"/>
    <property type="gene ID" value="ENSG00000184574.10"/>
</dbReference>
<dbReference type="GeneID" id="57121"/>
<dbReference type="KEGG" id="hsa:57121"/>
<dbReference type="MANE-Select" id="ENST00000329858.9">
    <property type="protein sequence ID" value="ENSP00000327875.4"/>
    <property type="RefSeq nucleotide sequence ID" value="NM_020400.6"/>
    <property type="RefSeq protein sequence ID" value="NP_065133.1"/>
</dbReference>
<dbReference type="UCSC" id="uc001qps.3">
    <property type="organism name" value="human"/>
</dbReference>
<dbReference type="AGR" id="HGNC:13307"/>
<dbReference type="CTD" id="57121"/>
<dbReference type="DisGeNET" id="57121"/>
<dbReference type="GeneCards" id="LPAR5"/>
<dbReference type="HGNC" id="HGNC:13307">
    <property type="gene designation" value="LPAR5"/>
</dbReference>
<dbReference type="HPA" id="ENSG00000184574">
    <property type="expression patterns" value="Tissue enhanced (esophagus)"/>
</dbReference>
<dbReference type="MIM" id="606926">
    <property type="type" value="gene"/>
</dbReference>
<dbReference type="neXtProt" id="NX_Q9H1C0"/>
<dbReference type="OpenTargets" id="ENSG00000184574"/>
<dbReference type="PharmGKB" id="PA28935"/>
<dbReference type="VEuPathDB" id="HostDB:ENSG00000184574"/>
<dbReference type="eggNOG" id="ENOG502QUH0">
    <property type="taxonomic scope" value="Eukaryota"/>
</dbReference>
<dbReference type="GeneTree" id="ENSGT00950000183136"/>
<dbReference type="HOGENOM" id="CLU_009579_8_2_1"/>
<dbReference type="InParanoid" id="Q9H1C0"/>
<dbReference type="OMA" id="QTCKDYT"/>
<dbReference type="OrthoDB" id="5781782at2759"/>
<dbReference type="PAN-GO" id="Q9H1C0">
    <property type="GO annotations" value="2 GO annotations based on evolutionary models"/>
</dbReference>
<dbReference type="PhylomeDB" id="Q9H1C0"/>
<dbReference type="TreeFam" id="TF350009"/>
<dbReference type="PathwayCommons" id="Q9H1C0"/>
<dbReference type="Reactome" id="R-HSA-416476">
    <property type="pathway name" value="G alpha (q) signalling events"/>
</dbReference>
<dbReference type="Reactome" id="R-HSA-418594">
    <property type="pathway name" value="G alpha (i) signalling events"/>
</dbReference>
<dbReference type="Reactome" id="R-HSA-419408">
    <property type="pathway name" value="Lysosphingolipid and LPA receptors"/>
</dbReference>
<dbReference type="SignaLink" id="Q9H1C0"/>
<dbReference type="SIGNOR" id="Q9H1C0"/>
<dbReference type="BioGRID-ORCS" id="57121">
    <property type="hits" value="22 hits in 1176 CRISPR screens"/>
</dbReference>
<dbReference type="ChiTaRS" id="LPAR5">
    <property type="organism name" value="human"/>
</dbReference>
<dbReference type="GeneWiki" id="LPAR5"/>
<dbReference type="GenomeRNAi" id="57121"/>
<dbReference type="Pharos" id="Q9H1C0">
    <property type="development level" value="Tchem"/>
</dbReference>
<dbReference type="PRO" id="PR:Q9H1C0"/>
<dbReference type="Proteomes" id="UP000005640">
    <property type="component" value="Chromosome 12"/>
</dbReference>
<dbReference type="RNAct" id="Q9H1C0">
    <property type="molecule type" value="protein"/>
</dbReference>
<dbReference type="Bgee" id="ENSG00000184574">
    <property type="expression patterns" value="Expressed in gingival epithelium and 161 other cell types or tissues"/>
</dbReference>
<dbReference type="ExpressionAtlas" id="Q9H1C0">
    <property type="expression patterns" value="baseline and differential"/>
</dbReference>
<dbReference type="GO" id="GO:0005886">
    <property type="term" value="C:plasma membrane"/>
    <property type="evidence" value="ECO:0000304"/>
    <property type="project" value="Reactome"/>
</dbReference>
<dbReference type="GO" id="GO:0004930">
    <property type="term" value="F:G protein-coupled receptor activity"/>
    <property type="evidence" value="ECO:0007669"/>
    <property type="project" value="UniProtKB-KW"/>
</dbReference>
<dbReference type="GO" id="GO:0048266">
    <property type="term" value="P:behavioral response to pain"/>
    <property type="evidence" value="ECO:0000318"/>
    <property type="project" value="GO_Central"/>
</dbReference>
<dbReference type="FunFam" id="1.20.1070.10:FF:000017">
    <property type="entry name" value="lysophosphatidic acid receptor 4"/>
    <property type="match status" value="1"/>
</dbReference>
<dbReference type="Gene3D" id="1.20.1070.10">
    <property type="entry name" value="Rhodopsin 7-helix transmembrane proteins"/>
    <property type="match status" value="1"/>
</dbReference>
<dbReference type="InterPro" id="IPR000276">
    <property type="entry name" value="GPCR_Rhodpsn"/>
</dbReference>
<dbReference type="InterPro" id="IPR017452">
    <property type="entry name" value="GPCR_Rhodpsn_7TM"/>
</dbReference>
<dbReference type="PANTHER" id="PTHR24234:SF6">
    <property type="entry name" value="LYSOPHOSPHATIDIC ACID RECEPTOR 5"/>
    <property type="match status" value="1"/>
</dbReference>
<dbReference type="PANTHER" id="PTHR24234">
    <property type="entry name" value="LYSOPHOSPHATIDIC ACID RECEPTOR 5/SPHINGOSYLPHOSPHORYLCHOLINE RECEPTOR"/>
    <property type="match status" value="1"/>
</dbReference>
<dbReference type="Pfam" id="PF00001">
    <property type="entry name" value="7tm_1"/>
    <property type="match status" value="1"/>
</dbReference>
<dbReference type="PRINTS" id="PR00237">
    <property type="entry name" value="GPCRRHODOPSN"/>
</dbReference>
<dbReference type="PRINTS" id="PR01157">
    <property type="entry name" value="P2YPURNOCPTR"/>
</dbReference>
<dbReference type="SUPFAM" id="SSF81321">
    <property type="entry name" value="Family A G protein-coupled receptor-like"/>
    <property type="match status" value="1"/>
</dbReference>
<dbReference type="PROSITE" id="PS00237">
    <property type="entry name" value="G_PROTEIN_RECEP_F1_1"/>
    <property type="match status" value="1"/>
</dbReference>
<dbReference type="PROSITE" id="PS50262">
    <property type="entry name" value="G_PROTEIN_RECEP_F1_2"/>
    <property type="match status" value="1"/>
</dbReference>
<name>LPAR5_HUMAN</name>
<feature type="chain" id="PRO_0000069600" description="Lysophosphatidic acid receptor 5">
    <location>
        <begin position="1"/>
        <end position="372"/>
    </location>
</feature>
<feature type="topological domain" description="Extracellular" evidence="1">
    <location>
        <begin position="1"/>
        <end position="26"/>
    </location>
</feature>
<feature type="transmembrane region" description="Helical; Name=1" evidence="1">
    <location>
        <begin position="27"/>
        <end position="47"/>
    </location>
</feature>
<feature type="topological domain" description="Cytoplasmic" evidence="1">
    <location>
        <begin position="48"/>
        <end position="55"/>
    </location>
</feature>
<feature type="transmembrane region" description="Helical; Name=2" evidence="1">
    <location>
        <begin position="56"/>
        <end position="76"/>
    </location>
</feature>
<feature type="topological domain" description="Extracellular" evidence="1">
    <location>
        <begin position="77"/>
        <end position="96"/>
    </location>
</feature>
<feature type="transmembrane region" description="Helical; Name=3" evidence="1">
    <location>
        <begin position="97"/>
        <end position="117"/>
    </location>
</feature>
<feature type="topological domain" description="Cytoplasmic" evidence="1">
    <location>
        <begin position="118"/>
        <end position="136"/>
    </location>
</feature>
<feature type="transmembrane region" description="Helical; Name=4" evidence="1">
    <location>
        <begin position="137"/>
        <end position="157"/>
    </location>
</feature>
<feature type="topological domain" description="Extracellular" evidence="1">
    <location>
        <begin position="158"/>
        <end position="187"/>
    </location>
</feature>
<feature type="transmembrane region" description="Helical; Name=5" evidence="1">
    <location>
        <begin position="188"/>
        <end position="208"/>
    </location>
</feature>
<feature type="topological domain" description="Cytoplasmic" evidence="1">
    <location>
        <begin position="209"/>
        <end position="239"/>
    </location>
</feature>
<feature type="transmembrane region" description="Helical; Name=6" evidence="1">
    <location>
        <begin position="240"/>
        <end position="260"/>
    </location>
</feature>
<feature type="topological domain" description="Extracellular" evidence="1">
    <location>
        <begin position="261"/>
        <end position="276"/>
    </location>
</feature>
<feature type="transmembrane region" description="Helical; Name=7" evidence="1">
    <location>
        <begin position="277"/>
        <end position="297"/>
    </location>
</feature>
<feature type="topological domain" description="Cytoplasmic" evidence="1">
    <location>
        <begin position="298"/>
        <end position="372"/>
    </location>
</feature>
<feature type="region of interest" description="Disordered" evidence="3">
    <location>
        <begin position="312"/>
        <end position="372"/>
    </location>
</feature>
<feature type="compositionally biased region" description="Polar residues" evidence="3">
    <location>
        <begin position="332"/>
        <end position="341"/>
    </location>
</feature>
<feature type="compositionally biased region" description="Polar residues" evidence="3">
    <location>
        <begin position="357"/>
        <end position="372"/>
    </location>
</feature>
<feature type="glycosylation site" description="N-linked (GlcNAc...) asparagine" evidence="1">
    <location>
        <position position="4"/>
    </location>
</feature>
<feature type="glycosylation site" description="N-linked (GlcNAc...) asparagine" evidence="1">
    <location>
        <position position="9"/>
    </location>
</feature>
<feature type="disulfide bond" evidence="2">
    <location>
        <begin position="94"/>
        <end position="175"/>
    </location>
</feature>
<sequence length="372" mass="41347">MLANSSSTNSSVLPCPDYRPTHRLHLVVYSLVLAAGLPLNALALWVFLRALRVHSVVSVYMCNLAASDLLFTLSLPVRLSYYALHHWPFPDLLCQTTGAIFQMNMYGSCIFLMLINVDRYAAIVHPLRLRHLRRPRVARLLCLGVWALILVFAVPAARVHRPSRCRYRDLEVRLCFESFSDELWKGRLLPLVLLAEALGFLLPLAAVVYSSGRVFWTLARPDATQSQRRRKTVRLLLANLVIFLLCFVPYNSTLAVYGLLRSKLVAASVPARDRVRGVLMVMVLLAGANCVLDPLVYYFSAEGFRNTLRGLGTPHRARTSATNGTRAALAQSERSAVTTDATRPDAASQGLLRPSDSHSLSSFTQCPQDSAL</sequence>